<gene>
    <name evidence="1" type="primary">gcvPB</name>
    <name type="ordered locus">BC_4224</name>
</gene>
<keyword id="KW-0560">Oxidoreductase</keyword>
<keyword id="KW-0663">Pyridoxal phosphate</keyword>
<keyword id="KW-1185">Reference proteome</keyword>
<dbReference type="EC" id="1.4.4.2" evidence="1"/>
<dbReference type="EMBL" id="AE016877">
    <property type="protein sequence ID" value="AAP11139.1"/>
    <property type="molecule type" value="Genomic_DNA"/>
</dbReference>
<dbReference type="RefSeq" id="NP_833938.1">
    <property type="nucleotide sequence ID" value="NC_004722.1"/>
</dbReference>
<dbReference type="SMR" id="Q818M5"/>
<dbReference type="STRING" id="226900.BC_4224"/>
<dbReference type="MetOSite" id="Q818M5"/>
<dbReference type="KEGG" id="bce:BC4224"/>
<dbReference type="PATRIC" id="fig|226900.8.peg.4365"/>
<dbReference type="HOGENOM" id="CLU_004620_5_0_9"/>
<dbReference type="Proteomes" id="UP000001417">
    <property type="component" value="Chromosome"/>
</dbReference>
<dbReference type="GO" id="GO:0005829">
    <property type="term" value="C:cytosol"/>
    <property type="evidence" value="ECO:0000318"/>
    <property type="project" value="GO_Central"/>
</dbReference>
<dbReference type="GO" id="GO:0005960">
    <property type="term" value="C:glycine cleavage complex"/>
    <property type="evidence" value="ECO:0000318"/>
    <property type="project" value="GO_Central"/>
</dbReference>
<dbReference type="GO" id="GO:0016594">
    <property type="term" value="F:glycine binding"/>
    <property type="evidence" value="ECO:0000318"/>
    <property type="project" value="GO_Central"/>
</dbReference>
<dbReference type="GO" id="GO:0004375">
    <property type="term" value="F:glycine dehydrogenase (decarboxylating) activity"/>
    <property type="evidence" value="ECO:0000318"/>
    <property type="project" value="GO_Central"/>
</dbReference>
<dbReference type="GO" id="GO:0030170">
    <property type="term" value="F:pyridoxal phosphate binding"/>
    <property type="evidence" value="ECO:0000318"/>
    <property type="project" value="GO_Central"/>
</dbReference>
<dbReference type="GO" id="GO:0019464">
    <property type="term" value="P:glycine decarboxylation via glycine cleavage system"/>
    <property type="evidence" value="ECO:0000318"/>
    <property type="project" value="GO_Central"/>
</dbReference>
<dbReference type="CDD" id="cd00613">
    <property type="entry name" value="GDC-P"/>
    <property type="match status" value="1"/>
</dbReference>
<dbReference type="FunFam" id="3.40.640.10:FF:000034">
    <property type="entry name" value="Probable glycine dehydrogenase (decarboxylating) subunit 2"/>
    <property type="match status" value="1"/>
</dbReference>
<dbReference type="FunFam" id="3.90.1150.10:FF:000014">
    <property type="entry name" value="Probable glycine dehydrogenase (decarboxylating) subunit 2"/>
    <property type="match status" value="1"/>
</dbReference>
<dbReference type="Gene3D" id="6.20.440.10">
    <property type="match status" value="1"/>
</dbReference>
<dbReference type="Gene3D" id="3.90.1150.10">
    <property type="entry name" value="Aspartate Aminotransferase, domain 1"/>
    <property type="match status" value="1"/>
</dbReference>
<dbReference type="Gene3D" id="3.40.640.10">
    <property type="entry name" value="Type I PLP-dependent aspartate aminotransferase-like (Major domain)"/>
    <property type="match status" value="1"/>
</dbReference>
<dbReference type="HAMAP" id="MF_00713">
    <property type="entry name" value="GcvPB"/>
    <property type="match status" value="1"/>
</dbReference>
<dbReference type="InterPro" id="IPR023012">
    <property type="entry name" value="GcvPB"/>
</dbReference>
<dbReference type="InterPro" id="IPR049316">
    <property type="entry name" value="GDC-P_C"/>
</dbReference>
<dbReference type="InterPro" id="IPR049315">
    <property type="entry name" value="GDC-P_N"/>
</dbReference>
<dbReference type="InterPro" id="IPR020581">
    <property type="entry name" value="GDC_P"/>
</dbReference>
<dbReference type="InterPro" id="IPR015424">
    <property type="entry name" value="PyrdxlP-dep_Trfase"/>
</dbReference>
<dbReference type="InterPro" id="IPR015421">
    <property type="entry name" value="PyrdxlP-dep_Trfase_major"/>
</dbReference>
<dbReference type="InterPro" id="IPR015422">
    <property type="entry name" value="PyrdxlP-dep_Trfase_small"/>
</dbReference>
<dbReference type="NCBIfam" id="NF003346">
    <property type="entry name" value="PRK04366.1"/>
    <property type="match status" value="1"/>
</dbReference>
<dbReference type="PANTHER" id="PTHR11773:SF1">
    <property type="entry name" value="GLYCINE DEHYDROGENASE (DECARBOXYLATING), MITOCHONDRIAL"/>
    <property type="match status" value="1"/>
</dbReference>
<dbReference type="PANTHER" id="PTHR11773">
    <property type="entry name" value="GLYCINE DEHYDROGENASE, DECARBOXYLATING"/>
    <property type="match status" value="1"/>
</dbReference>
<dbReference type="Pfam" id="PF21478">
    <property type="entry name" value="GcvP2_C"/>
    <property type="match status" value="1"/>
</dbReference>
<dbReference type="Pfam" id="PF02347">
    <property type="entry name" value="GDC-P"/>
    <property type="match status" value="1"/>
</dbReference>
<dbReference type="SUPFAM" id="SSF53383">
    <property type="entry name" value="PLP-dependent transferases"/>
    <property type="match status" value="1"/>
</dbReference>
<comment type="function">
    <text evidence="1">The glycine cleavage system catalyzes the degradation of glycine. The P protein binds the alpha-amino group of glycine through its pyridoxal phosphate cofactor; CO(2) is released and the remaining methylamine moiety is then transferred to the lipoamide cofactor of the H protein.</text>
</comment>
<comment type="catalytic activity">
    <reaction evidence="1">
        <text>N(6)-[(R)-lipoyl]-L-lysyl-[glycine-cleavage complex H protein] + glycine + H(+) = N(6)-[(R)-S(8)-aminomethyldihydrolipoyl]-L-lysyl-[glycine-cleavage complex H protein] + CO2</text>
        <dbReference type="Rhea" id="RHEA:24304"/>
        <dbReference type="Rhea" id="RHEA-COMP:10494"/>
        <dbReference type="Rhea" id="RHEA-COMP:10495"/>
        <dbReference type="ChEBI" id="CHEBI:15378"/>
        <dbReference type="ChEBI" id="CHEBI:16526"/>
        <dbReference type="ChEBI" id="CHEBI:57305"/>
        <dbReference type="ChEBI" id="CHEBI:83099"/>
        <dbReference type="ChEBI" id="CHEBI:83143"/>
        <dbReference type="EC" id="1.4.4.2"/>
    </reaction>
</comment>
<comment type="cofactor">
    <cofactor evidence="1">
        <name>pyridoxal 5'-phosphate</name>
        <dbReference type="ChEBI" id="CHEBI:597326"/>
    </cofactor>
</comment>
<comment type="subunit">
    <text evidence="1">The glycine cleavage system is composed of four proteins: P, T, L and H. In this organism, the P 'protein' is a heterodimer of two subunits.</text>
</comment>
<comment type="similarity">
    <text evidence="1">Belongs to the GcvP family. C-terminal subunit subfamily.</text>
</comment>
<protein>
    <recommendedName>
        <fullName evidence="1">Probable glycine dehydrogenase (decarboxylating) subunit 2</fullName>
        <ecNumber evidence="1">1.4.4.2</ecNumber>
    </recommendedName>
    <alternativeName>
        <fullName evidence="1">Glycine cleavage system P-protein subunit 2</fullName>
    </alternativeName>
    <alternativeName>
        <fullName evidence="1">Glycine decarboxylase subunit 2</fullName>
    </alternativeName>
    <alternativeName>
        <fullName evidence="1">Glycine dehydrogenase (aminomethyl-transferring) subunit 2</fullName>
    </alternativeName>
</protein>
<proteinExistence type="inferred from homology"/>
<feature type="chain" id="PRO_0000166996" description="Probable glycine dehydrogenase (decarboxylating) subunit 2">
    <location>
        <begin position="1"/>
        <end position="534"/>
    </location>
</feature>
<feature type="modified residue" description="N6-(pyridoxal phosphate)lysine" evidence="1">
    <location>
        <position position="273"/>
    </location>
</feature>
<organism>
    <name type="scientific">Bacillus cereus (strain ATCC 14579 / DSM 31 / CCUG 7414 / JCM 2152 / NBRC 15305 / NCIMB 9373 / NCTC 2599 / NRRL B-3711)</name>
    <dbReference type="NCBI Taxonomy" id="226900"/>
    <lineage>
        <taxon>Bacteria</taxon>
        <taxon>Bacillati</taxon>
        <taxon>Bacillota</taxon>
        <taxon>Bacilli</taxon>
        <taxon>Bacillales</taxon>
        <taxon>Bacillaceae</taxon>
        <taxon>Bacillus</taxon>
        <taxon>Bacillus cereus group</taxon>
    </lineage>
</organism>
<name>GCSPB_BACCR</name>
<sequence length="534" mass="59408">MKNQDQALIFEVSKEGRIGYSLPKLDVEEVKLEDVFESDYIRVEDAELPEVSELDIMRHYTALSNRNHGVDSGFYPLGSCTMKYNPKINESVARFAGFANIHPLQDEKTVQGAMELMYDLQEHLIEITGMDTVTLQPAAGAHGEWTGLMLIRAYHEANGDFNRTKVIVPDSAHGTNPASATVAGFETITVKSNENGLVDLEDLKRVVNEETAALMLTNPNTLGLFEENILEMAEIVHNAGGKLYYDGANLNAVLSQARPGDMGFDVVHLNLHKTFTGPHGGGGPGSGPVGVKADLIPYLPKPILEKTESGYHFNYDRPEAIGRVKPFYGNFGINVRAYTYIRSMGPDGLRAVTEYAVLNANYMMRRLAPFYDLPFDRHCKHEFVLSGRRQKKLGVRTLDIAKRLLDFGYHPPTIYFPLNVEECIMIEPTETESKETLDGFIDKMIQIAKEVEENPEVVQEAPHTTVIKRLDETMAARKTSFTLCKASSCTSLIRITKEELAEVGSFFVWRICPALTDSKLPTQNLAGAKKPGGR</sequence>
<evidence type="ECO:0000255" key="1">
    <source>
        <dbReference type="HAMAP-Rule" id="MF_00713"/>
    </source>
</evidence>
<reference key="1">
    <citation type="journal article" date="2003" name="Nature">
        <title>Genome sequence of Bacillus cereus and comparative analysis with Bacillus anthracis.</title>
        <authorList>
            <person name="Ivanova N."/>
            <person name="Sorokin A."/>
            <person name="Anderson I."/>
            <person name="Galleron N."/>
            <person name="Candelon B."/>
            <person name="Kapatral V."/>
            <person name="Bhattacharyya A."/>
            <person name="Reznik G."/>
            <person name="Mikhailova N."/>
            <person name="Lapidus A."/>
            <person name="Chu L."/>
            <person name="Mazur M."/>
            <person name="Goltsman E."/>
            <person name="Larsen N."/>
            <person name="D'Souza M."/>
            <person name="Walunas T."/>
            <person name="Grechkin Y."/>
            <person name="Pusch G."/>
            <person name="Haselkorn R."/>
            <person name="Fonstein M."/>
            <person name="Ehrlich S.D."/>
            <person name="Overbeek R."/>
            <person name="Kyrpides N.C."/>
        </authorList>
    </citation>
    <scope>NUCLEOTIDE SEQUENCE [LARGE SCALE GENOMIC DNA]</scope>
    <source>
        <strain>ATCC 14579 / DSM 31 / CCUG 7414 / JCM 2152 / NBRC 15305 / NCIMB 9373 / NCTC 2599 / NRRL B-3711</strain>
    </source>
</reference>
<accession>Q818M5</accession>